<feature type="chain" id="PRO_0000149406" description="Adenine phosphoribosyltransferase">
    <location>
        <begin position="1"/>
        <end position="180"/>
    </location>
</feature>
<name>APT_MANSM</name>
<sequence length="180" mass="19689">MNEQLQLIKSSIKSIPNHPKEGIIFRDITSLIEVPEAFQATVDLIVGNYKNQGITKVVGTESRGFIFGAPVALALGLPFVLVRKPRKLPRETISQSYQLEYGEDTLEMHVDSVKAGDNVLIIDDLLATGGTVDATIKLIKRLGGDVKHAAFVINLPELGGEERLRSLGVEPFTLVNFEGH</sequence>
<evidence type="ECO:0000255" key="1">
    <source>
        <dbReference type="HAMAP-Rule" id="MF_00004"/>
    </source>
</evidence>
<evidence type="ECO:0000305" key="2"/>
<dbReference type="EC" id="2.4.2.7" evidence="1"/>
<dbReference type="EMBL" id="AE016827">
    <property type="protein sequence ID" value="AAU37477.1"/>
    <property type="status" value="ALT_INIT"/>
    <property type="molecule type" value="Genomic_DNA"/>
</dbReference>
<dbReference type="RefSeq" id="WP_041639646.1">
    <property type="nucleotide sequence ID" value="NC_006300.1"/>
</dbReference>
<dbReference type="SMR" id="Q65U83"/>
<dbReference type="STRING" id="221988.MS0870"/>
<dbReference type="KEGG" id="msu:MS0870"/>
<dbReference type="eggNOG" id="COG0503">
    <property type="taxonomic scope" value="Bacteria"/>
</dbReference>
<dbReference type="HOGENOM" id="CLU_063339_3_0_6"/>
<dbReference type="OrthoDB" id="9803963at2"/>
<dbReference type="UniPathway" id="UPA00588">
    <property type="reaction ID" value="UER00646"/>
</dbReference>
<dbReference type="Proteomes" id="UP000000607">
    <property type="component" value="Chromosome"/>
</dbReference>
<dbReference type="GO" id="GO:0005829">
    <property type="term" value="C:cytosol"/>
    <property type="evidence" value="ECO:0007669"/>
    <property type="project" value="TreeGrafter"/>
</dbReference>
<dbReference type="GO" id="GO:0003999">
    <property type="term" value="F:adenine phosphoribosyltransferase activity"/>
    <property type="evidence" value="ECO:0007669"/>
    <property type="project" value="UniProtKB-UniRule"/>
</dbReference>
<dbReference type="GO" id="GO:0006168">
    <property type="term" value="P:adenine salvage"/>
    <property type="evidence" value="ECO:0007669"/>
    <property type="project" value="InterPro"/>
</dbReference>
<dbReference type="GO" id="GO:0044209">
    <property type="term" value="P:AMP salvage"/>
    <property type="evidence" value="ECO:0007669"/>
    <property type="project" value="UniProtKB-UniRule"/>
</dbReference>
<dbReference type="GO" id="GO:0006166">
    <property type="term" value="P:purine ribonucleoside salvage"/>
    <property type="evidence" value="ECO:0007669"/>
    <property type="project" value="UniProtKB-KW"/>
</dbReference>
<dbReference type="CDD" id="cd06223">
    <property type="entry name" value="PRTases_typeI"/>
    <property type="match status" value="1"/>
</dbReference>
<dbReference type="FunFam" id="3.40.50.2020:FF:000004">
    <property type="entry name" value="Adenine phosphoribosyltransferase"/>
    <property type="match status" value="1"/>
</dbReference>
<dbReference type="Gene3D" id="3.40.50.2020">
    <property type="match status" value="1"/>
</dbReference>
<dbReference type="HAMAP" id="MF_00004">
    <property type="entry name" value="Aden_phosphoribosyltr"/>
    <property type="match status" value="1"/>
</dbReference>
<dbReference type="InterPro" id="IPR005764">
    <property type="entry name" value="Ade_phspho_trans"/>
</dbReference>
<dbReference type="InterPro" id="IPR050120">
    <property type="entry name" value="Adenine_PRTase"/>
</dbReference>
<dbReference type="InterPro" id="IPR000836">
    <property type="entry name" value="PRibTrfase_dom"/>
</dbReference>
<dbReference type="InterPro" id="IPR029057">
    <property type="entry name" value="PRTase-like"/>
</dbReference>
<dbReference type="NCBIfam" id="TIGR01090">
    <property type="entry name" value="apt"/>
    <property type="match status" value="1"/>
</dbReference>
<dbReference type="NCBIfam" id="NF002632">
    <property type="entry name" value="PRK02304.1-1"/>
    <property type="match status" value="1"/>
</dbReference>
<dbReference type="NCBIfam" id="NF002634">
    <property type="entry name" value="PRK02304.1-3"/>
    <property type="match status" value="1"/>
</dbReference>
<dbReference type="NCBIfam" id="NF002636">
    <property type="entry name" value="PRK02304.1-5"/>
    <property type="match status" value="1"/>
</dbReference>
<dbReference type="PANTHER" id="PTHR11776">
    <property type="entry name" value="ADENINE PHOSPHORIBOSYLTRANSFERASE"/>
    <property type="match status" value="1"/>
</dbReference>
<dbReference type="PANTHER" id="PTHR11776:SF7">
    <property type="entry name" value="PHOSPHORIBOSYLTRANSFERASE DOMAIN-CONTAINING PROTEIN"/>
    <property type="match status" value="1"/>
</dbReference>
<dbReference type="Pfam" id="PF00156">
    <property type="entry name" value="Pribosyltran"/>
    <property type="match status" value="1"/>
</dbReference>
<dbReference type="SUPFAM" id="SSF53271">
    <property type="entry name" value="PRTase-like"/>
    <property type="match status" value="1"/>
</dbReference>
<dbReference type="PROSITE" id="PS00103">
    <property type="entry name" value="PUR_PYR_PR_TRANSFER"/>
    <property type="match status" value="1"/>
</dbReference>
<gene>
    <name evidence="1" type="primary">apt</name>
    <name type="ordered locus">MS0870</name>
</gene>
<accession>Q65U83</accession>
<reference key="1">
    <citation type="journal article" date="2004" name="Nat. Biotechnol.">
        <title>The genome sequence of the capnophilic rumen bacterium Mannheimia succiniciproducens.</title>
        <authorList>
            <person name="Hong S.H."/>
            <person name="Kim J.S."/>
            <person name="Lee S.Y."/>
            <person name="In Y.H."/>
            <person name="Choi S.S."/>
            <person name="Rih J.-K."/>
            <person name="Kim C.H."/>
            <person name="Jeong H."/>
            <person name="Hur C.G."/>
            <person name="Kim J.J."/>
        </authorList>
    </citation>
    <scope>NUCLEOTIDE SEQUENCE [LARGE SCALE GENOMIC DNA]</scope>
    <source>
        <strain>KCTC 0769BP / MBEL55E</strain>
    </source>
</reference>
<proteinExistence type="inferred from homology"/>
<keyword id="KW-0963">Cytoplasm</keyword>
<keyword id="KW-0328">Glycosyltransferase</keyword>
<keyword id="KW-0660">Purine salvage</keyword>
<keyword id="KW-0808">Transferase</keyword>
<organism>
    <name type="scientific">Mannheimia succiniciproducens (strain KCTC 0769BP / MBEL55E)</name>
    <dbReference type="NCBI Taxonomy" id="221988"/>
    <lineage>
        <taxon>Bacteria</taxon>
        <taxon>Pseudomonadati</taxon>
        <taxon>Pseudomonadota</taxon>
        <taxon>Gammaproteobacteria</taxon>
        <taxon>Pasteurellales</taxon>
        <taxon>Pasteurellaceae</taxon>
        <taxon>Basfia</taxon>
    </lineage>
</organism>
<protein>
    <recommendedName>
        <fullName evidence="1">Adenine phosphoribosyltransferase</fullName>
        <shortName evidence="1">APRT</shortName>
        <ecNumber evidence="1">2.4.2.7</ecNumber>
    </recommendedName>
</protein>
<comment type="function">
    <text evidence="1">Catalyzes a salvage reaction resulting in the formation of AMP, that is energically less costly than de novo synthesis.</text>
</comment>
<comment type="catalytic activity">
    <reaction evidence="1">
        <text>AMP + diphosphate = 5-phospho-alpha-D-ribose 1-diphosphate + adenine</text>
        <dbReference type="Rhea" id="RHEA:16609"/>
        <dbReference type="ChEBI" id="CHEBI:16708"/>
        <dbReference type="ChEBI" id="CHEBI:33019"/>
        <dbReference type="ChEBI" id="CHEBI:58017"/>
        <dbReference type="ChEBI" id="CHEBI:456215"/>
        <dbReference type="EC" id="2.4.2.7"/>
    </reaction>
</comment>
<comment type="pathway">
    <text evidence="1">Purine metabolism; AMP biosynthesis via salvage pathway; AMP from adenine: step 1/1.</text>
</comment>
<comment type="subunit">
    <text evidence="1">Homodimer.</text>
</comment>
<comment type="subcellular location">
    <subcellularLocation>
        <location evidence="1">Cytoplasm</location>
    </subcellularLocation>
</comment>
<comment type="similarity">
    <text evidence="1">Belongs to the purine/pyrimidine phosphoribosyltransferase family.</text>
</comment>
<comment type="sequence caution" evidence="2">
    <conflict type="erroneous initiation">
        <sequence resource="EMBL-CDS" id="AAU37477"/>
    </conflict>
</comment>